<evidence type="ECO:0000250" key="1"/>
<evidence type="ECO:0000255" key="2"/>
<evidence type="ECO:0000269" key="3">
    <source>
    </source>
</evidence>
<evidence type="ECO:0000305" key="4"/>
<protein>
    <recommendedName>
        <fullName>Sensor histidine kinase YxjM</fullName>
        <ecNumber>2.7.13.3</ecNumber>
    </recommendedName>
</protein>
<dbReference type="EC" id="2.7.13.3"/>
<dbReference type="EMBL" id="X99339">
    <property type="protein sequence ID" value="CAA67716.1"/>
    <property type="molecule type" value="Genomic_DNA"/>
</dbReference>
<dbReference type="EMBL" id="D83026">
    <property type="protein sequence ID" value="BAA11714.1"/>
    <property type="molecule type" value="Genomic_DNA"/>
</dbReference>
<dbReference type="EMBL" id="AL009126">
    <property type="protein sequence ID" value="CAB15916.1"/>
    <property type="molecule type" value="Genomic_DNA"/>
</dbReference>
<dbReference type="PIR" id="B70080">
    <property type="entry name" value="B70080"/>
</dbReference>
<dbReference type="RefSeq" id="NP_391769.1">
    <property type="nucleotide sequence ID" value="NC_000964.3"/>
</dbReference>
<dbReference type="RefSeq" id="WP_003244524.1">
    <property type="nucleotide sequence ID" value="NZ_OZ025638.1"/>
</dbReference>
<dbReference type="SMR" id="P55183"/>
<dbReference type="FunCoup" id="P55183">
    <property type="interactions" value="216"/>
</dbReference>
<dbReference type="STRING" id="224308.BSU38900"/>
<dbReference type="PaxDb" id="224308-BSU38900"/>
<dbReference type="EnsemblBacteria" id="CAB15916">
    <property type="protein sequence ID" value="CAB15916"/>
    <property type="gene ID" value="BSU_38900"/>
</dbReference>
<dbReference type="GeneID" id="937441"/>
<dbReference type="KEGG" id="bsu:BSU38900"/>
<dbReference type="PATRIC" id="fig|224308.179.peg.4209"/>
<dbReference type="eggNOG" id="COG4585">
    <property type="taxonomic scope" value="Bacteria"/>
</dbReference>
<dbReference type="InParanoid" id="P55183"/>
<dbReference type="OrthoDB" id="199946at2"/>
<dbReference type="PhylomeDB" id="P55183"/>
<dbReference type="BioCyc" id="BSUB:BSU38900-MONOMER"/>
<dbReference type="Proteomes" id="UP000001570">
    <property type="component" value="Chromosome"/>
</dbReference>
<dbReference type="GO" id="GO:0005886">
    <property type="term" value="C:plasma membrane"/>
    <property type="evidence" value="ECO:0000318"/>
    <property type="project" value="GO_Central"/>
</dbReference>
<dbReference type="GO" id="GO:0005524">
    <property type="term" value="F:ATP binding"/>
    <property type="evidence" value="ECO:0007669"/>
    <property type="project" value="UniProtKB-KW"/>
</dbReference>
<dbReference type="GO" id="GO:0000155">
    <property type="term" value="F:phosphorelay sensor kinase activity"/>
    <property type="evidence" value="ECO:0007669"/>
    <property type="project" value="InterPro"/>
</dbReference>
<dbReference type="GO" id="GO:0046983">
    <property type="term" value="F:protein dimerization activity"/>
    <property type="evidence" value="ECO:0007669"/>
    <property type="project" value="InterPro"/>
</dbReference>
<dbReference type="GO" id="GO:0004672">
    <property type="term" value="F:protein kinase activity"/>
    <property type="evidence" value="ECO:0000318"/>
    <property type="project" value="GO_Central"/>
</dbReference>
<dbReference type="CDD" id="cd16917">
    <property type="entry name" value="HATPase_UhpB-NarQ-NarX-like"/>
    <property type="match status" value="1"/>
</dbReference>
<dbReference type="Gene3D" id="1.20.5.1930">
    <property type="match status" value="1"/>
</dbReference>
<dbReference type="Gene3D" id="3.30.565.10">
    <property type="entry name" value="Histidine kinase-like ATPase, C-terminal domain"/>
    <property type="match status" value="1"/>
</dbReference>
<dbReference type="InterPro" id="IPR036890">
    <property type="entry name" value="HATPase_C_sf"/>
</dbReference>
<dbReference type="InterPro" id="IPR050482">
    <property type="entry name" value="Sensor_HK_TwoCompSys"/>
</dbReference>
<dbReference type="InterPro" id="IPR011712">
    <property type="entry name" value="Sig_transdc_His_kin_sub3_dim/P"/>
</dbReference>
<dbReference type="PANTHER" id="PTHR24421">
    <property type="entry name" value="NITRATE/NITRITE SENSOR PROTEIN NARX-RELATED"/>
    <property type="match status" value="1"/>
</dbReference>
<dbReference type="PANTHER" id="PTHR24421:SF10">
    <property type="entry name" value="NITRATE_NITRITE SENSOR PROTEIN NARQ"/>
    <property type="match status" value="1"/>
</dbReference>
<dbReference type="Pfam" id="PF02518">
    <property type="entry name" value="HATPase_c"/>
    <property type="match status" value="1"/>
</dbReference>
<dbReference type="Pfam" id="PF07730">
    <property type="entry name" value="HisKA_3"/>
    <property type="match status" value="1"/>
</dbReference>
<dbReference type="SUPFAM" id="SSF55874">
    <property type="entry name" value="ATPase domain of HSP90 chaperone/DNA topoisomerase II/histidine kinase"/>
    <property type="match status" value="1"/>
</dbReference>
<accession>P55183</accession>
<keyword id="KW-0067">ATP-binding</keyword>
<keyword id="KW-1003">Cell membrane</keyword>
<keyword id="KW-0418">Kinase</keyword>
<keyword id="KW-0472">Membrane</keyword>
<keyword id="KW-0547">Nucleotide-binding</keyword>
<keyword id="KW-0597">Phosphoprotein</keyword>
<keyword id="KW-1185">Reference proteome</keyword>
<keyword id="KW-0808">Transferase</keyword>
<keyword id="KW-0812">Transmembrane</keyword>
<keyword id="KW-1133">Transmembrane helix</keyword>
<keyword id="KW-0902">Two-component regulatory system</keyword>
<comment type="function">
    <text evidence="3">Probable member of the two-component regulatory system YxjM/YxjL. May activate YxjL by phosphorylation.</text>
</comment>
<comment type="catalytic activity">
    <reaction>
        <text>ATP + protein L-histidine = ADP + protein N-phospho-L-histidine.</text>
        <dbReference type="EC" id="2.7.13.3"/>
    </reaction>
</comment>
<comment type="subcellular location">
    <subcellularLocation>
        <location evidence="4">Cell membrane</location>
        <topology evidence="4">Multi-pass membrane protein</topology>
    </subcellularLocation>
</comment>
<sequence length="406" mass="45235">MNGQTPARHYYKKLVPSLILILNCIQFLSHPTKADPILLAFVFAVYLAFIWIIPYVASTAVSLSIFIGLWLLTDFFWAVSGQEQGAAYFLIVFLMIYAAFRLPSRLSLIFTACLIGGNILLLSSQGGSLNTIISNISIMLGLYVLFSSMRFRREARREAERNHAELAKMHVQLEHAHKELQKAHAELQEASVLSLRYAVLEERTRIARDIHDSIGHELTSVIVQLQSLPYILKSSKEDSEKVIQNVLSVARECLQEVRSVVHQMGRSESMVGLTALRGLIHQVEERSGLHVSLDTAGLSEESWPPNVSETIYRILQEALTNIIRHADASHAAAVISNDKSHLYVTITDDGQFTGSLTYGFGLTGMKERAEKAGGSLTFSAVQPSGLKIELSLPLMTTNKEQKDEQR</sequence>
<organism>
    <name type="scientific">Bacillus subtilis (strain 168)</name>
    <dbReference type="NCBI Taxonomy" id="224308"/>
    <lineage>
        <taxon>Bacteria</taxon>
        <taxon>Bacillati</taxon>
        <taxon>Bacillota</taxon>
        <taxon>Bacilli</taxon>
        <taxon>Bacillales</taxon>
        <taxon>Bacillaceae</taxon>
        <taxon>Bacillus</taxon>
    </lineage>
</organism>
<proteinExistence type="inferred from homology"/>
<feature type="chain" id="PRO_0000074924" description="Sensor histidine kinase YxjM">
    <location>
        <begin position="1"/>
        <end position="406"/>
    </location>
</feature>
<feature type="topological domain" description="Cytoplasmic" evidence="2">
    <location>
        <begin position="1"/>
        <end position="13"/>
    </location>
</feature>
<feature type="transmembrane region" description="Helical" evidence="2">
    <location>
        <begin position="14"/>
        <end position="34"/>
    </location>
</feature>
<feature type="topological domain" description="Extracellular" evidence="2">
    <location>
        <begin position="35"/>
        <end position="36"/>
    </location>
</feature>
<feature type="transmembrane region" description="Helical" evidence="2">
    <location>
        <begin position="37"/>
        <end position="57"/>
    </location>
</feature>
<feature type="topological domain" description="Cytoplasmic" evidence="2">
    <location>
        <position position="58"/>
    </location>
</feature>
<feature type="transmembrane region" description="Helical" evidence="2">
    <location>
        <begin position="59"/>
        <end position="79"/>
    </location>
</feature>
<feature type="transmembrane region" description="Helical" evidence="2">
    <location>
        <begin position="80"/>
        <end position="100"/>
    </location>
</feature>
<feature type="topological domain" description="Cytoplasmic" evidence="2">
    <location>
        <position position="101"/>
    </location>
</feature>
<feature type="transmembrane region" description="Helical" evidence="2">
    <location>
        <begin position="102"/>
        <end position="122"/>
    </location>
</feature>
<feature type="topological domain" description="Extracellular" evidence="2">
    <location>
        <begin position="123"/>
        <end position="125"/>
    </location>
</feature>
<feature type="transmembrane region" description="Helical" evidence="2">
    <location>
        <begin position="126"/>
        <end position="146"/>
    </location>
</feature>
<feature type="topological domain" description="Cytoplasmic" evidence="2">
    <location>
        <begin position="147"/>
        <end position="406"/>
    </location>
</feature>
<feature type="domain" description="Histidine kinase">
    <location>
        <begin position="209"/>
        <end position="396"/>
    </location>
</feature>
<feature type="modified residue" description="Phosphohistidine; by autocatalysis" evidence="1">
    <location>
        <position position="211"/>
    </location>
</feature>
<reference key="1">
    <citation type="journal article" date="1996" name="FEMS Microbiol. Lett.">
        <title>Expression of a pepT homologue from Bacillus subtilis.</title>
        <authorList>
            <person name="Schroegel O."/>
            <person name="Krispin O."/>
            <person name="Allmansberger R."/>
        </authorList>
    </citation>
    <scope>NUCLEOTIDE SEQUENCE [GENOMIC DNA]</scope>
    <source>
        <strain>168</strain>
    </source>
</reference>
<reference key="2">
    <citation type="journal article" date="1996" name="Microbiology">
        <title>Sequencing of a 65 kb region of the Bacillus subtilis genome containing the lic and cel loci, and creation of a 177 kb contig covering the gnt-sacXY region.</title>
        <authorList>
            <person name="Yoshida K."/>
            <person name="Shindo K."/>
            <person name="Sano H."/>
            <person name="Seki S."/>
            <person name="Fujimura M."/>
            <person name="Yanai N."/>
            <person name="Miwa Y."/>
            <person name="Fujita Y."/>
        </authorList>
    </citation>
    <scope>NUCLEOTIDE SEQUENCE [GENOMIC DNA]</scope>
    <source>
        <strain>168 / BGSC1A1</strain>
    </source>
</reference>
<reference key="3">
    <citation type="journal article" date="1997" name="Nature">
        <title>The complete genome sequence of the Gram-positive bacterium Bacillus subtilis.</title>
        <authorList>
            <person name="Kunst F."/>
            <person name="Ogasawara N."/>
            <person name="Moszer I."/>
            <person name="Albertini A.M."/>
            <person name="Alloni G."/>
            <person name="Azevedo V."/>
            <person name="Bertero M.G."/>
            <person name="Bessieres P."/>
            <person name="Bolotin A."/>
            <person name="Borchert S."/>
            <person name="Borriss R."/>
            <person name="Boursier L."/>
            <person name="Brans A."/>
            <person name="Braun M."/>
            <person name="Brignell S.C."/>
            <person name="Bron S."/>
            <person name="Brouillet S."/>
            <person name="Bruschi C.V."/>
            <person name="Caldwell B."/>
            <person name="Capuano V."/>
            <person name="Carter N.M."/>
            <person name="Choi S.-K."/>
            <person name="Codani J.-J."/>
            <person name="Connerton I.F."/>
            <person name="Cummings N.J."/>
            <person name="Daniel R.A."/>
            <person name="Denizot F."/>
            <person name="Devine K.M."/>
            <person name="Duesterhoeft A."/>
            <person name="Ehrlich S.D."/>
            <person name="Emmerson P.T."/>
            <person name="Entian K.-D."/>
            <person name="Errington J."/>
            <person name="Fabret C."/>
            <person name="Ferrari E."/>
            <person name="Foulger D."/>
            <person name="Fritz C."/>
            <person name="Fujita M."/>
            <person name="Fujita Y."/>
            <person name="Fuma S."/>
            <person name="Galizzi A."/>
            <person name="Galleron N."/>
            <person name="Ghim S.-Y."/>
            <person name="Glaser P."/>
            <person name="Goffeau A."/>
            <person name="Golightly E.J."/>
            <person name="Grandi G."/>
            <person name="Guiseppi G."/>
            <person name="Guy B.J."/>
            <person name="Haga K."/>
            <person name="Haiech J."/>
            <person name="Harwood C.R."/>
            <person name="Henaut A."/>
            <person name="Hilbert H."/>
            <person name="Holsappel S."/>
            <person name="Hosono S."/>
            <person name="Hullo M.-F."/>
            <person name="Itaya M."/>
            <person name="Jones L.-M."/>
            <person name="Joris B."/>
            <person name="Karamata D."/>
            <person name="Kasahara Y."/>
            <person name="Klaerr-Blanchard M."/>
            <person name="Klein C."/>
            <person name="Kobayashi Y."/>
            <person name="Koetter P."/>
            <person name="Koningstein G."/>
            <person name="Krogh S."/>
            <person name="Kumano M."/>
            <person name="Kurita K."/>
            <person name="Lapidus A."/>
            <person name="Lardinois S."/>
            <person name="Lauber J."/>
            <person name="Lazarevic V."/>
            <person name="Lee S.-M."/>
            <person name="Levine A."/>
            <person name="Liu H."/>
            <person name="Masuda S."/>
            <person name="Mauel C."/>
            <person name="Medigue C."/>
            <person name="Medina N."/>
            <person name="Mellado R.P."/>
            <person name="Mizuno M."/>
            <person name="Moestl D."/>
            <person name="Nakai S."/>
            <person name="Noback M."/>
            <person name="Noone D."/>
            <person name="O'Reilly M."/>
            <person name="Ogawa K."/>
            <person name="Ogiwara A."/>
            <person name="Oudega B."/>
            <person name="Park S.-H."/>
            <person name="Parro V."/>
            <person name="Pohl T.M."/>
            <person name="Portetelle D."/>
            <person name="Porwollik S."/>
            <person name="Prescott A.M."/>
            <person name="Presecan E."/>
            <person name="Pujic P."/>
            <person name="Purnelle B."/>
            <person name="Rapoport G."/>
            <person name="Rey M."/>
            <person name="Reynolds S."/>
            <person name="Rieger M."/>
            <person name="Rivolta C."/>
            <person name="Rocha E."/>
            <person name="Roche B."/>
            <person name="Rose M."/>
            <person name="Sadaie Y."/>
            <person name="Sato T."/>
            <person name="Scanlan E."/>
            <person name="Schleich S."/>
            <person name="Schroeter R."/>
            <person name="Scoffone F."/>
            <person name="Sekiguchi J."/>
            <person name="Sekowska A."/>
            <person name="Seror S.J."/>
            <person name="Serror P."/>
            <person name="Shin B.-S."/>
            <person name="Soldo B."/>
            <person name="Sorokin A."/>
            <person name="Tacconi E."/>
            <person name="Takagi T."/>
            <person name="Takahashi H."/>
            <person name="Takemaru K."/>
            <person name="Takeuchi M."/>
            <person name="Tamakoshi A."/>
            <person name="Tanaka T."/>
            <person name="Terpstra P."/>
            <person name="Tognoni A."/>
            <person name="Tosato V."/>
            <person name="Uchiyama S."/>
            <person name="Vandenbol M."/>
            <person name="Vannier F."/>
            <person name="Vassarotti A."/>
            <person name="Viari A."/>
            <person name="Wambutt R."/>
            <person name="Wedler E."/>
            <person name="Wedler H."/>
            <person name="Weitzenegger T."/>
            <person name="Winters P."/>
            <person name="Wipat A."/>
            <person name="Yamamoto H."/>
            <person name="Yamane K."/>
            <person name="Yasumoto K."/>
            <person name="Yata K."/>
            <person name="Yoshida K."/>
            <person name="Yoshikawa H.-F."/>
            <person name="Zumstein E."/>
            <person name="Yoshikawa H."/>
            <person name="Danchin A."/>
        </authorList>
    </citation>
    <scope>NUCLEOTIDE SEQUENCE [LARGE SCALE GENOMIC DNA]</scope>
    <source>
        <strain>168</strain>
    </source>
</reference>
<reference key="4">
    <citation type="journal article" date="2001" name="J. Bacteriol.">
        <title>Comprehensive DNA microarray analysis of Bacillus subtilis two-component regulatory systems.</title>
        <authorList>
            <person name="Kobayashi K."/>
            <person name="Ogura M."/>
            <person name="Yamaguchi H."/>
            <person name="Yoshida K."/>
            <person name="Ogasawara N."/>
            <person name="Tanaka T."/>
            <person name="Fujita Y."/>
        </authorList>
    </citation>
    <scope>FUNCTION</scope>
</reference>
<name>YXJM_BACSU</name>
<gene>
    <name type="primary">yxjM</name>
    <name type="ordered locus">BSU38900</name>
</gene>